<feature type="chain" id="PRO_0000114631" description="Dynein axonemal heavy chain 5">
    <location>
        <begin position="1"/>
        <end position="4621"/>
    </location>
</feature>
<feature type="region of interest" description="Stem" evidence="1">
    <location>
        <begin position="1"/>
        <end position="1938"/>
    </location>
</feature>
<feature type="region of interest" description="Disordered" evidence="4">
    <location>
        <begin position="901"/>
        <end position="921"/>
    </location>
</feature>
<feature type="region of interest" description="AAA 1" evidence="1">
    <location>
        <begin position="1939"/>
        <end position="2161"/>
    </location>
</feature>
<feature type="region of interest" description="AAA 2" evidence="1">
    <location>
        <begin position="2221"/>
        <end position="2440"/>
    </location>
</feature>
<feature type="region of interest" description="AAA 3" evidence="1">
    <location>
        <begin position="2547"/>
        <end position="2800"/>
    </location>
</feature>
<feature type="region of interest" description="AAA 4" evidence="1">
    <location>
        <begin position="2913"/>
        <end position="3167"/>
    </location>
</feature>
<feature type="region of interest" description="Stalk" evidence="1">
    <location>
        <begin position="3182"/>
        <end position="3479"/>
    </location>
</feature>
<feature type="region of interest" description="AAA 5" evidence="1">
    <location>
        <begin position="3564"/>
        <end position="3794"/>
    </location>
</feature>
<feature type="region of interest" description="AAA 6" evidence="1">
    <location>
        <begin position="4009"/>
        <end position="4223"/>
    </location>
</feature>
<feature type="coiled-coil region" evidence="3">
    <location>
        <begin position="260"/>
        <end position="305"/>
    </location>
</feature>
<feature type="coiled-coil region" evidence="3">
    <location>
        <begin position="803"/>
        <end position="825"/>
    </location>
</feature>
<feature type="coiled-coil region" evidence="3">
    <location>
        <begin position="1065"/>
        <end position="1094"/>
    </location>
</feature>
<feature type="coiled-coil region" evidence="3">
    <location>
        <begin position="1433"/>
        <end position="1462"/>
    </location>
</feature>
<feature type="coiled-coil region" evidence="3">
    <location>
        <begin position="3186"/>
        <end position="3299"/>
    </location>
</feature>
<feature type="coiled-coil region" evidence="3">
    <location>
        <begin position="3423"/>
        <end position="3490"/>
    </location>
</feature>
<feature type="coiled-coil region" evidence="3">
    <location>
        <begin position="3729"/>
        <end position="3814"/>
    </location>
</feature>
<feature type="coiled-coil region" evidence="3">
    <location>
        <begin position="4389"/>
        <end position="4417"/>
    </location>
</feature>
<feature type="binding site" evidence="3">
    <location>
        <begin position="1977"/>
        <end position="1984"/>
    </location>
    <ligand>
        <name>ATP</name>
        <dbReference type="ChEBI" id="CHEBI:30616"/>
    </ligand>
</feature>
<feature type="binding site" evidence="3">
    <location>
        <begin position="2259"/>
        <end position="2266"/>
    </location>
    <ligand>
        <name>ATP</name>
        <dbReference type="ChEBI" id="CHEBI:30616"/>
    </ligand>
</feature>
<feature type="sequence conflict" description="In Ref. 1; AAL69993." evidence="9" ref="1">
    <original>V</original>
    <variation>A</variation>
    <location>
        <position position="892"/>
    </location>
</feature>
<feature type="sequence conflict" description="In Ref. 1; AAL69993." evidence="9" ref="1">
    <original>A</original>
    <variation>S</variation>
    <location>
        <position position="898"/>
    </location>
</feature>
<feature type="sequence conflict" description="In Ref. 1; AAL69993." evidence="9" ref="1">
    <original>RSVKS</original>
    <variation>SLSRA</variation>
    <location>
        <begin position="3854"/>
        <end position="3858"/>
    </location>
</feature>
<sequence length="4621" mass="527558">MFRIGRRQLWKQSVTRVLTQRLKEEKEAKRARLDGRHDYLFAIVASCLDLNKPEVEDALLEGNQIERMDQLFAVGGLRHLMFYYQDVEGAEAGHCGSSGGVNPASGKMKKPKVFVTEGKDVALMGACVFFIRSDPSKAITPENIHREVSFNTLDTADGGLLNSVRRLLSDIFIPALRASSHGWGELEGLQDASSIRQEFLSSLEGFVGILSGAQNSLKEKVNLQKCDIIELKSLKEPTDYLALASNPETVEKVECCMRVWIKQMEQILAENSQLRKEADDVGPRAELEHWKQRLSRFNYLLDQLKSPDVKAALALLAAAKSKLLKVWRDTDIRITDAANEAKDNVKYLYTLEKCCDPLYSSDPVTMIDAIPTLINAIKMVYSISHYYNTSEKITSLFVKVTNQMISACKAHITNNGTATIWSQPQEIVMQKIAAVIKLKQGYQSCFQETKQKLKQNPSEKQFDFSEMYIFGKFETFHRRLAKIMDIFTTFKTYSVLQDSKIEGLEDMATKYQDIVAAIKKKEYNFLDQREMDFDQDYEEFCKRINELHNDLQRFMDITFEKIPSTRQALSTLKKFERLNIPNLGIEEKYQIIFQNFATDIDTISKLYTKQKYDPPLARNQPPIAGKILWARQLFHRLEQPMQLFQQHPFVLRTAEAKPVIRSYNRIAKVLLEFEVLYHRAWLQQIEEIHAGLEASLLVKAPGTGELFVNFDPQILVLFRETQCMSQLGLPVSPFAAALFQKRDMFKKNFSDMKMMLSEYERVKLKMPPAIEQLMFPHLARVDEALQPGLAVLTWTSLNIGGYLENAFAKIKDLELLLDRVNDLIEFRIHAILEEMSSMALCQLPQDDPLTCEEFLQMTKDLCVSGAQLLHFKSSLVEEAVNELINMLLDVDVPPEEAAENVCHENASPSGNTSGRREGHSEALASSFNAGASSLPLTATARKKKETEVLEEARELLSHFNHQNTDALLKVTRNTLEAIRRRIHFSHMINFRDSNDASKAKQNHLPIFRASVTLAIPNIAMTPALEDIQQTLNKAVECIISVPKGVRQWSSELLSKRKMHERKMAAVKNNEDSDSDAEVEENELQETLEIASINLPIPVQTQNYYKNISDNKEIVKLVSVLSTVISSTKKEVITSMDRFKRYNHIWQKEKEDTIMTFIAQNPLLPEFESRILYFQSLEQEINAEPEYIRVGSIALYTADLKLSLTAETKAWMAVIGRHCNRKYRAEMENILTVVEESQKKLSRPIKDLDDIRIAMAALKEIREQQISTDFQVGPIEESYALLNKYGLLVAKEEMDKVDTLRYAWEKLLARASDVQNELGALQPSFRKELISTVEVFLQDCQQFYLDYDLNGPMASGLKPQEASGRLIIFQNQFDNIYRKYITYTGGEELFGLPVTPYPQLLEIKRQLNLLQKIYSLYNNVIETVNSYQDTLWSDVNIEKINNELLEFQNRCRKLPRALKDWQAFLDLKKTIDDFSECCPLLEYMASNAMVERHWQRITALTGHSLDVGNETFKLRNIMEAPLLKYKEEIEDICISAVKERDIEQKLRQVINEWDNKTLTFSGFKTRGELLLRGDSTSEVIASMEDSLMLLGSLLSNRYNMPFKAQIQKWVQCLSNSTDIIENWMTVQNLWIYLEAVFVGGDIAKQLPKEAKRFSNIDKSWVKIMTRAHEIPNVVQCCVGDETMGQLLPHLLDQLEICQKSLTGYLEKKRLCFPRFFFVSDPALLEILGQASDSHTIQAHLLNVFDNIKTVKFHDKIYDRILSISSREGETIELDKPVMAEGNVEVWLNSLLEESQSSLHLVIRQAAANIQEPGFQLIEFLSSFPAQVGLLGIQMLWTRDSEEALRNAKFDKKIMQKTNQAFLELLNMLIEITTKDLSSMERVKYETLITIHVHQRDIFDDLCHMHVKSPTDFEWLKQCRFYFKEDSDKTMIHITDVAFIYQNEFLGCTDRLVITPLTDRCYITLAQALGMSMGGAPAGPAGTGKTETTKDMGRCLGKYVVVFNCSDQMDFRGLGRIFKGLAQSGSWGCFDEFNRIDLPVLSVAAQQISIILTCKKEHKKSFIFTDGDNVTMNPEFGLFLTMNPGYAGRQELPENLKINFRSVAMMVPDRQIIIRVKLASCGFIDNVVLARKFFTLYQLCEEQLSKQVHYDFGLRNILSVLRTLGAAKRASPTDTESTIVMRVLRDMNLSKLIDEDEPLFLSLIEDLFPNILLDKAGYPELETAISKQVEEAGLINHPPWKLKVIQLFETQRVRHGMMTLGPSGSGKTTCIHTLMKAMTDCGKPHREMRMNPKAITAPQMFGRLDVATNDWTDGIFSTLWRKTLKAKKGEHIWIVLDGPVDAIWIENLNSVLDDNKTLTLANGDRIPMAPNCKIVFEPHNIDNASPATVSRNGMVFMSSSVLDWSPILEGFLKRRSPQEAEILRQLYAETFPDLYRFSIQNLEFKMEVLEAFVITQSTHMLQGLIPPKEQAGEVDPEHLGRLFVFAMMWSVGAVLELEGRRRMELWLRSREGPTLHLPQLTDAGDTMFDYYVAPNGTWRHWSLCTPEYVYPPDTTPEYGSILVPNVDNVRTDFLIKTIAKQGKAVLLIGEQGTAKTVIIKGFMSKFDPESHMVKNLNFSSATTPVMFQRTIESYVDKRMGTTYGPPAGKKMAVFIDDLNMPVINEWGDQVTNEIVRQLMEQSGFYNLEKPGEFTSIVDIQFLAAMIHPGGGRNDIPQRLKRQFSIFNCTLPSDASMDKIFGVIGAGYYCAQRGFSEEVQDALIKLVPLTRRLWQMTKLKMLPTPAKFHYVFNLRDLSRIWQGMLNITSEVIKDTDELLRLWKHECKRVIADRFSMSSDVTWFDKAVVSLVEEEFGEEKAPVVDCGVDAYFVDFLRDAPEATGETPEEADAEMPKLYEPIASLNHLRERLSVFLQLYNESIRGTGMDMVFFIDAMVHLVKISRVIRTPRGNALLVGVGGSGKQSLTRLASFIAGYTSFQITLTRSYNTSNLMEDLKVLYRTAGQQGKGITFIFTDNEIKEESFLEYMNNVLSSGEVSNLFARDEIDEINSDLTPIMKKEHPRRPPTNDNLYEYFMSRVRGNLHIVLCFSPVGEKFRNRALKFPALISGCTIDWFSRWPKDALVAVSEHFLSSYTIDCTAEIKKELVQCMGSFQDGVAEKCADYFQRFRRSTHVTPKSYLSFIQGYKFIYEEKHMEVQSLANRMNTGLEKLKEASESVAALSKELAGKEKELQVANEKADTVLKEVTMKAQAAEKVKAEVQKVKDKAQAIVDSISKDKAIAEEKLEAAKPALEEAEAALQTIKPSDIATVRTLGRPPHLIMRIMDCVLLLFQRRVNAVKIDVDKGCTMPSWQESLKLMTAGNFLQNLQQFPKDTINEEVIEFLNPYFEMSDYNIETAKRVCGNVAGLCSWTKAMASFFSINKEVLPLKANLIVQENRHILAMQDLQKAQAELDAKQAELDVVQAEYEQAMAEKQTLLEDADRCRHKMQTASTLISGLAGEKERWTEQSKEFAAQTKRLVGDVLLATAFLSYSGPFNQEFRDLLLHDWKKEMKARKIPFGNGLNLNEMLIDAPTISEWNLQGLPNDDLSIQNGIIVTKASRYPLLIDPQTQGKIWIKNKESQNELQITSLNHKYFRNHLEDSLSLGRPLLIEDVGEELDPALDNVLEKNFIKTGSTFKVKVGDKEVDVMDGFKLYITTKLPNPAYTPEISARTSIIDFTVTVKGLEDQLLGRVILTEKQELEKERTHLLEDVTANKRRMKELEDNLLYRLTSTQGSLVEDESLIIVLSNTKKTAEEVTQKLEISGETEIQINSAREEYRPVATRGSILYFLITEMRLVNEMYQTSLRQFLGLFDLSLARSVKSPITSKRIANIIEHMTYEVFKYAARGLYEEHKFLFTLLLTLKIDIQRNLVKHEEFLTLIKGGASLDLKACPPKPSKWILDMTWLNLVELSKLKQFSDILDQISRNEKMWRVWFDKENPEEEPLPNAYDKSLDCFRRLLLIRSWCPDRTIAQARKYIMDSMGENYAEGVILDLEKTWEESDPRTPLICLLSMGSDPTDSIIALGKRLKIETRYVSMGQGQEVHARKLLHQTMANGGWVLLQNCHLGLDFLDELMDVVTETETVHDTFRLWITTEVHKQFPITLLQMSIKFANEPPQGLRAGLRRTYGGVSQDLLDVSVGAQWKPMLYAVAFLHSTVQERRKFGPLGWNIPYEFNQADFNATVQFIQNHLDDMDVKKGVSWTTVRYMIGEIQYGGRVTDDYDKRLLNTFAKVWFSENMFGPDFTFYQGYNIPKCSTVDGYLQYIQSLPAYDSPEVFGLHPNADITYQSKLAKDVLDTILGIQPKDSSGGGDETREAVVARLADDMLEKLPEDYSPFEVKERLQKMGPFQPMNIFLRQEIDRMQRVLSLVRSTLTELKLAVDGTIIMSENLRDALDCMFDARIPARWKKASWVSSTLGFWFTELLERNCQFTSWVSNGRPHCFWMTGFFNPQGFLTAMRQEITRANKGWALDNMVLCNEVTKFMKDDISAPPTEGVYVYGLYLEGAGWDKRNMKLIESKPKVLFELMPVIRIFAENNTARDPRLYCCPIYKKPVRTDLNYIAAVDLKTAQAPEHWVLRGVALLCDVK</sequence>
<protein>
    <recommendedName>
        <fullName evidence="9">Dynein axonemal heavy chain 5</fullName>
    </recommendedName>
    <alternativeName>
        <fullName>Axonemal beta dynein heavy chain 5</fullName>
        <shortName>mDNAH5</shortName>
    </alternativeName>
    <alternativeName>
        <fullName>Ciliary dynein heavy chain 5</fullName>
    </alternativeName>
</protein>
<dbReference type="EMBL" id="AF466704">
    <property type="protein sequence ID" value="AAL69993.1"/>
    <property type="molecule type" value="mRNA"/>
</dbReference>
<dbReference type="EMBL" id="AC131997">
    <property type="status" value="NOT_ANNOTATED_CDS"/>
    <property type="molecule type" value="Genomic_DNA"/>
</dbReference>
<dbReference type="EMBL" id="AC154880">
    <property type="status" value="NOT_ANNOTATED_CDS"/>
    <property type="molecule type" value="Genomic_DNA"/>
</dbReference>
<dbReference type="EMBL" id="AK052643">
    <property type="protein sequence ID" value="BAC35077.2"/>
    <property type="molecule type" value="mRNA"/>
</dbReference>
<dbReference type="CCDS" id="CCDS27404.1"/>
<dbReference type="RefSeq" id="NP_579943.3">
    <property type="nucleotide sequence ID" value="NM_133365.3"/>
</dbReference>
<dbReference type="SMR" id="Q8VHE6"/>
<dbReference type="BioGRID" id="225282">
    <property type="interactions" value="4"/>
</dbReference>
<dbReference type="FunCoup" id="Q8VHE6">
    <property type="interactions" value="243"/>
</dbReference>
<dbReference type="IntAct" id="Q8VHE6">
    <property type="interactions" value="1"/>
</dbReference>
<dbReference type="STRING" id="10090.ENSMUSP00000069751"/>
<dbReference type="GlyGen" id="Q8VHE6">
    <property type="glycosylation" value="1 site, 1 O-linked glycan (1 site)"/>
</dbReference>
<dbReference type="iPTMnet" id="Q8VHE6"/>
<dbReference type="PhosphoSitePlus" id="Q8VHE6"/>
<dbReference type="PaxDb" id="10090-ENSMUSP00000069751"/>
<dbReference type="PeptideAtlas" id="Q8VHE6"/>
<dbReference type="ProteomicsDB" id="277647"/>
<dbReference type="Antibodypedia" id="50446">
    <property type="antibodies" value="55 antibodies from 16 providers"/>
</dbReference>
<dbReference type="DNASU" id="110082"/>
<dbReference type="Ensembl" id="ENSMUST00000067048.8">
    <property type="protein sequence ID" value="ENSMUSP00000069751.7"/>
    <property type="gene ID" value="ENSMUSG00000022262.9"/>
</dbReference>
<dbReference type="GeneID" id="110082"/>
<dbReference type="KEGG" id="mmu:110082"/>
<dbReference type="UCSC" id="uc007vjy.1">
    <property type="organism name" value="mouse"/>
</dbReference>
<dbReference type="AGR" id="MGI:107718"/>
<dbReference type="CTD" id="1767"/>
<dbReference type="MGI" id="MGI:107718">
    <property type="gene designation" value="Dnah5"/>
</dbReference>
<dbReference type="VEuPathDB" id="HostDB:ENSMUSG00000022262"/>
<dbReference type="eggNOG" id="KOG3595">
    <property type="taxonomic scope" value="Eukaryota"/>
</dbReference>
<dbReference type="GeneTree" id="ENSGT00940000155533"/>
<dbReference type="HOGENOM" id="CLU_000038_9_1_1"/>
<dbReference type="InParanoid" id="Q8VHE6"/>
<dbReference type="OMA" id="WWKKASW"/>
<dbReference type="OrthoDB" id="424310at2759"/>
<dbReference type="PhylomeDB" id="Q8VHE6"/>
<dbReference type="TreeFam" id="TF316836"/>
<dbReference type="BioGRID-ORCS" id="110082">
    <property type="hits" value="1 hit in 79 CRISPR screens"/>
</dbReference>
<dbReference type="ChiTaRS" id="Dnah5">
    <property type="organism name" value="mouse"/>
</dbReference>
<dbReference type="PRO" id="PR:Q8VHE6"/>
<dbReference type="Proteomes" id="UP000000589">
    <property type="component" value="Chromosome 15"/>
</dbReference>
<dbReference type="RNAct" id="Q8VHE6">
    <property type="molecule type" value="protein"/>
</dbReference>
<dbReference type="Bgee" id="ENSMUSG00000022262">
    <property type="expression patterns" value="Expressed in olfactory epithelium and 18 other cell types or tissues"/>
</dbReference>
<dbReference type="GO" id="GO:0097728">
    <property type="term" value="C:9+0 motile cilium"/>
    <property type="evidence" value="ECO:0000314"/>
    <property type="project" value="MGI"/>
</dbReference>
<dbReference type="GO" id="GO:0097729">
    <property type="term" value="C:9+2 motile cilium"/>
    <property type="evidence" value="ECO:0000314"/>
    <property type="project" value="MGI"/>
</dbReference>
<dbReference type="GO" id="GO:0005858">
    <property type="term" value="C:axonemal dynein complex"/>
    <property type="evidence" value="ECO:0000315"/>
    <property type="project" value="MGI"/>
</dbReference>
<dbReference type="GO" id="GO:0005930">
    <property type="term" value="C:axoneme"/>
    <property type="evidence" value="ECO:0000314"/>
    <property type="project" value="MGI"/>
</dbReference>
<dbReference type="GO" id="GO:0005737">
    <property type="term" value="C:cytoplasm"/>
    <property type="evidence" value="ECO:0000314"/>
    <property type="project" value="MGI"/>
</dbReference>
<dbReference type="GO" id="GO:0005576">
    <property type="term" value="C:extracellular region"/>
    <property type="evidence" value="ECO:0007669"/>
    <property type="project" value="GOC"/>
</dbReference>
<dbReference type="GO" id="GO:0097386">
    <property type="term" value="C:glial cell projection"/>
    <property type="evidence" value="ECO:0000314"/>
    <property type="project" value="MGI"/>
</dbReference>
<dbReference type="GO" id="GO:0005874">
    <property type="term" value="C:microtubule"/>
    <property type="evidence" value="ECO:0007669"/>
    <property type="project" value="UniProtKB-KW"/>
</dbReference>
<dbReference type="GO" id="GO:0031514">
    <property type="term" value="C:motile cilium"/>
    <property type="evidence" value="ECO:0000250"/>
    <property type="project" value="UniProtKB"/>
</dbReference>
<dbReference type="GO" id="GO:0036157">
    <property type="term" value="C:outer dynein arm"/>
    <property type="evidence" value="ECO:0000314"/>
    <property type="project" value="MGI"/>
</dbReference>
<dbReference type="GO" id="GO:0005524">
    <property type="term" value="F:ATP binding"/>
    <property type="evidence" value="ECO:0007669"/>
    <property type="project" value="UniProtKB-KW"/>
</dbReference>
<dbReference type="GO" id="GO:0016887">
    <property type="term" value="F:ATP hydrolysis activity"/>
    <property type="evidence" value="ECO:0007669"/>
    <property type="project" value="InterPro"/>
</dbReference>
<dbReference type="GO" id="GO:0045505">
    <property type="term" value="F:dynein intermediate chain binding"/>
    <property type="evidence" value="ECO:0007669"/>
    <property type="project" value="InterPro"/>
</dbReference>
<dbReference type="GO" id="GO:0051959">
    <property type="term" value="F:dynein light intermediate chain binding"/>
    <property type="evidence" value="ECO:0007669"/>
    <property type="project" value="InterPro"/>
</dbReference>
<dbReference type="GO" id="GO:0003777">
    <property type="term" value="F:microtubule motor activity"/>
    <property type="evidence" value="ECO:0000315"/>
    <property type="project" value="MGI"/>
</dbReference>
<dbReference type="GO" id="GO:0008569">
    <property type="term" value="F:minus-end-directed microtubule motor activity"/>
    <property type="evidence" value="ECO:0007669"/>
    <property type="project" value="InterPro"/>
</dbReference>
<dbReference type="GO" id="GO:0003341">
    <property type="term" value="P:cilium movement"/>
    <property type="evidence" value="ECO:0000315"/>
    <property type="project" value="MGI"/>
</dbReference>
<dbReference type="GO" id="GO:0007368">
    <property type="term" value="P:determination of left/right symmetry"/>
    <property type="evidence" value="ECO:0000315"/>
    <property type="project" value="MGI"/>
</dbReference>
<dbReference type="GO" id="GO:0003351">
    <property type="term" value="P:epithelial cilium movement involved in extracellular fluid movement"/>
    <property type="evidence" value="ECO:0000315"/>
    <property type="project" value="MGI"/>
</dbReference>
<dbReference type="GO" id="GO:0051649">
    <property type="term" value="P:establishment of localization in cell"/>
    <property type="evidence" value="ECO:0000315"/>
    <property type="project" value="MGI"/>
</dbReference>
<dbReference type="GO" id="GO:0030317">
    <property type="term" value="P:flagellated sperm motility"/>
    <property type="evidence" value="ECO:0007669"/>
    <property type="project" value="Ensembl"/>
</dbReference>
<dbReference type="GO" id="GO:0007507">
    <property type="term" value="P:heart development"/>
    <property type="evidence" value="ECO:0000315"/>
    <property type="project" value="MGI"/>
</dbReference>
<dbReference type="GO" id="GO:0021670">
    <property type="term" value="P:lateral ventricle development"/>
    <property type="evidence" value="ECO:0000315"/>
    <property type="project" value="MGI"/>
</dbReference>
<dbReference type="GO" id="GO:0036158">
    <property type="term" value="P:outer dynein arm assembly"/>
    <property type="evidence" value="ECO:0007669"/>
    <property type="project" value="Ensembl"/>
</dbReference>
<dbReference type="FunFam" id="3.40.50.300:FF:001221">
    <property type="entry name" value="Axonemal dynein heavy chain 8"/>
    <property type="match status" value="1"/>
</dbReference>
<dbReference type="FunFam" id="1.10.8.1220:FF:000001">
    <property type="entry name" value="Dynein axonemal heavy chain 5"/>
    <property type="match status" value="1"/>
</dbReference>
<dbReference type="FunFam" id="1.10.8.710:FF:000003">
    <property type="entry name" value="Dynein axonemal heavy chain 5"/>
    <property type="match status" value="1"/>
</dbReference>
<dbReference type="FunFam" id="1.20.58.1120:FF:000004">
    <property type="entry name" value="Dynein axonemal heavy chain 5"/>
    <property type="match status" value="1"/>
</dbReference>
<dbReference type="FunFam" id="1.20.920.20:FF:000004">
    <property type="entry name" value="Dynein axonemal heavy chain 5"/>
    <property type="match status" value="1"/>
</dbReference>
<dbReference type="FunFam" id="1.20.920.30:FF:000004">
    <property type="entry name" value="Dynein axonemal heavy chain 5"/>
    <property type="match status" value="1"/>
</dbReference>
<dbReference type="FunFam" id="3.20.180.20:FF:000001">
    <property type="entry name" value="Dynein axonemal heavy chain 5"/>
    <property type="match status" value="1"/>
</dbReference>
<dbReference type="FunFam" id="3.40.50.300:FF:000543">
    <property type="entry name" value="Dynein axonemal heavy chain 5"/>
    <property type="match status" value="1"/>
</dbReference>
<dbReference type="FunFam" id="3.40.50.300:FF:002141">
    <property type="entry name" value="Dynein heavy chain"/>
    <property type="match status" value="1"/>
</dbReference>
<dbReference type="FunFam" id="1.10.472.130:FF:000009">
    <property type="entry name" value="Dynein heavy chain 5, axonemal"/>
    <property type="match status" value="1"/>
</dbReference>
<dbReference type="FunFam" id="1.10.8.720:FF:000004">
    <property type="entry name" value="Dynein heavy chain 5, axonemal"/>
    <property type="match status" value="1"/>
</dbReference>
<dbReference type="FunFam" id="1.20.1270.280:FF:000002">
    <property type="entry name" value="Dynein heavy chain 5, axonemal"/>
    <property type="match status" value="1"/>
</dbReference>
<dbReference type="FunFam" id="3.10.490.20:FF:000003">
    <property type="entry name" value="Dynein heavy chain 5, axonemal"/>
    <property type="match status" value="1"/>
</dbReference>
<dbReference type="FunFam" id="3.40.50.300:FF:000044">
    <property type="entry name" value="Dynein heavy chain 5, axonemal"/>
    <property type="match status" value="1"/>
</dbReference>
<dbReference type="FunFam" id="1.10.287.2620:FF:000003">
    <property type="entry name" value="Dynein, axonemal, heavy chain 5"/>
    <property type="match status" value="1"/>
</dbReference>
<dbReference type="FunFam" id="1.20.140.100:FF:000003">
    <property type="entry name" value="Dynein, axonemal, heavy chain 5"/>
    <property type="match status" value="1"/>
</dbReference>
<dbReference type="FunFam" id="3.40.50.300:FF:000049">
    <property type="entry name" value="Dynein, axonemal, heavy chain 5"/>
    <property type="match status" value="1"/>
</dbReference>
<dbReference type="FunFam" id="3.40.50.300:FF:000320">
    <property type="entry name" value="Dynein, axonemal, heavy chain 5"/>
    <property type="match status" value="1"/>
</dbReference>
<dbReference type="Gene3D" id="1.10.287.2620">
    <property type="match status" value="1"/>
</dbReference>
<dbReference type="Gene3D" id="1.10.472.130">
    <property type="match status" value="1"/>
</dbReference>
<dbReference type="Gene3D" id="1.10.8.1220">
    <property type="match status" value="1"/>
</dbReference>
<dbReference type="Gene3D" id="1.10.8.710">
    <property type="match status" value="1"/>
</dbReference>
<dbReference type="Gene3D" id="1.20.1270.280">
    <property type="match status" value="1"/>
</dbReference>
<dbReference type="Gene3D" id="1.20.58.1120">
    <property type="match status" value="1"/>
</dbReference>
<dbReference type="Gene3D" id="1.20.920.20">
    <property type="match status" value="1"/>
</dbReference>
<dbReference type="Gene3D" id="1.20.920.30">
    <property type="match status" value="1"/>
</dbReference>
<dbReference type="Gene3D" id="3.10.490.20">
    <property type="match status" value="1"/>
</dbReference>
<dbReference type="Gene3D" id="6.10.140.1060">
    <property type="match status" value="1"/>
</dbReference>
<dbReference type="Gene3D" id="1.20.140.100">
    <property type="entry name" value="Dynein heavy chain, N-terminal domain 2"/>
    <property type="match status" value="1"/>
</dbReference>
<dbReference type="Gene3D" id="3.20.180.20">
    <property type="entry name" value="Dynein heavy chain, N-terminal domain 2"/>
    <property type="match status" value="1"/>
</dbReference>
<dbReference type="Gene3D" id="3.40.50.300">
    <property type="entry name" value="P-loop containing nucleotide triphosphate hydrolases"/>
    <property type="match status" value="5"/>
</dbReference>
<dbReference type="Gene3D" id="1.10.8.720">
    <property type="entry name" value="Region D6 of dynein motor"/>
    <property type="match status" value="1"/>
</dbReference>
<dbReference type="InterPro" id="IPR003593">
    <property type="entry name" value="AAA+_ATPase"/>
</dbReference>
<dbReference type="InterPro" id="IPR035699">
    <property type="entry name" value="AAA_6"/>
</dbReference>
<dbReference type="InterPro" id="IPR035706">
    <property type="entry name" value="AAA_9"/>
</dbReference>
<dbReference type="InterPro" id="IPR041658">
    <property type="entry name" value="AAA_lid_11"/>
</dbReference>
<dbReference type="InterPro" id="IPR042219">
    <property type="entry name" value="AAA_lid_11_sf"/>
</dbReference>
<dbReference type="InterPro" id="IPR026983">
    <property type="entry name" value="DHC"/>
</dbReference>
<dbReference type="InterPro" id="IPR041589">
    <property type="entry name" value="DNAH3_AAA_lid_1"/>
</dbReference>
<dbReference type="InterPro" id="IPR056759">
    <property type="entry name" value="DYH2-5-8_CC"/>
</dbReference>
<dbReference type="InterPro" id="IPR042222">
    <property type="entry name" value="Dynein_2_N"/>
</dbReference>
<dbReference type="InterPro" id="IPR043157">
    <property type="entry name" value="Dynein_AAA1S"/>
</dbReference>
<dbReference type="InterPro" id="IPR041466">
    <property type="entry name" value="Dynein_AAA5_ext"/>
</dbReference>
<dbReference type="InterPro" id="IPR041228">
    <property type="entry name" value="Dynein_C"/>
</dbReference>
<dbReference type="InterPro" id="IPR043160">
    <property type="entry name" value="Dynein_C_barrel"/>
</dbReference>
<dbReference type="InterPro" id="IPR024743">
    <property type="entry name" value="Dynein_HC_stalk"/>
</dbReference>
<dbReference type="InterPro" id="IPR024317">
    <property type="entry name" value="Dynein_heavy_chain_D4_dom"/>
</dbReference>
<dbReference type="InterPro" id="IPR004273">
    <property type="entry name" value="Dynein_heavy_D6_P-loop"/>
</dbReference>
<dbReference type="InterPro" id="IPR013602">
    <property type="entry name" value="Dynein_heavy_linker"/>
</dbReference>
<dbReference type="InterPro" id="IPR013594">
    <property type="entry name" value="Dynein_heavy_tail"/>
</dbReference>
<dbReference type="InterPro" id="IPR042228">
    <property type="entry name" value="Dynein_linker_3"/>
</dbReference>
<dbReference type="InterPro" id="IPR027417">
    <property type="entry name" value="P-loop_NTPase"/>
</dbReference>
<dbReference type="PANTHER" id="PTHR46532:SF13">
    <property type="entry name" value="CYTOPLASMIC DYNEIN 1 HEAVY CHAIN 1"/>
    <property type="match status" value="1"/>
</dbReference>
<dbReference type="PANTHER" id="PTHR46532">
    <property type="entry name" value="MALE FERTILITY FACTOR KL5"/>
    <property type="match status" value="1"/>
</dbReference>
<dbReference type="Pfam" id="PF12774">
    <property type="entry name" value="AAA_6"/>
    <property type="match status" value="1"/>
</dbReference>
<dbReference type="Pfam" id="PF12775">
    <property type="entry name" value="AAA_7"/>
    <property type="match status" value="1"/>
</dbReference>
<dbReference type="Pfam" id="PF12780">
    <property type="entry name" value="AAA_8"/>
    <property type="match status" value="1"/>
</dbReference>
<dbReference type="Pfam" id="PF12781">
    <property type="entry name" value="AAA_9"/>
    <property type="match status" value="1"/>
</dbReference>
<dbReference type="Pfam" id="PF17857">
    <property type="entry name" value="AAA_lid_1"/>
    <property type="match status" value="1"/>
</dbReference>
<dbReference type="Pfam" id="PF18198">
    <property type="entry name" value="AAA_lid_11"/>
    <property type="match status" value="1"/>
</dbReference>
<dbReference type="Pfam" id="PF08385">
    <property type="entry name" value="DHC_N1"/>
    <property type="match status" value="1"/>
</dbReference>
<dbReference type="Pfam" id="PF08393">
    <property type="entry name" value="DHC_N2"/>
    <property type="match status" value="1"/>
</dbReference>
<dbReference type="Pfam" id="PF25007">
    <property type="entry name" value="DYH2-5-8_CC"/>
    <property type="match status" value="1"/>
</dbReference>
<dbReference type="Pfam" id="PF17852">
    <property type="entry name" value="Dynein_AAA_lid"/>
    <property type="match status" value="1"/>
</dbReference>
<dbReference type="Pfam" id="PF18199">
    <property type="entry name" value="Dynein_C"/>
    <property type="match status" value="1"/>
</dbReference>
<dbReference type="Pfam" id="PF03028">
    <property type="entry name" value="Dynein_heavy"/>
    <property type="match status" value="1"/>
</dbReference>
<dbReference type="Pfam" id="PF12777">
    <property type="entry name" value="MT"/>
    <property type="match status" value="1"/>
</dbReference>
<dbReference type="SMART" id="SM00382">
    <property type="entry name" value="AAA"/>
    <property type="match status" value="3"/>
</dbReference>
<dbReference type="SUPFAM" id="SSF52540">
    <property type="entry name" value="P-loop containing nucleoside triphosphate hydrolases"/>
    <property type="match status" value="4"/>
</dbReference>
<accession>Q8VHE6</accession>
<accession>E9QKD7</accession>
<accession>Q8BWG1</accession>
<reference key="1">
    <citation type="journal article" date="2002" name="Hum. Mol. Genet.">
        <title>Loss of function of axonemal dynein Mdnah5 causes primary ciliary dyskinesia and hydrocephalus.</title>
        <authorList>
            <person name="Ibanez-Tallon I."/>
            <person name="Gorokhova S."/>
            <person name="Heintz N."/>
        </authorList>
    </citation>
    <scope>NUCLEOTIDE SEQUENCE [MRNA]</scope>
    <scope>DISEASE</scope>
    <source>
        <strain>C57BL/6J X CBA/J</strain>
    </source>
</reference>
<reference key="2">
    <citation type="journal article" date="2009" name="PLoS Biol.">
        <title>Lineage-specific biology revealed by a finished genome assembly of the mouse.</title>
        <authorList>
            <person name="Church D.M."/>
            <person name="Goodstadt L."/>
            <person name="Hillier L.W."/>
            <person name="Zody M.C."/>
            <person name="Goldstein S."/>
            <person name="She X."/>
            <person name="Bult C.J."/>
            <person name="Agarwala R."/>
            <person name="Cherry J.L."/>
            <person name="DiCuccio M."/>
            <person name="Hlavina W."/>
            <person name="Kapustin Y."/>
            <person name="Meric P."/>
            <person name="Maglott D."/>
            <person name="Birtle Z."/>
            <person name="Marques A.C."/>
            <person name="Graves T."/>
            <person name="Zhou S."/>
            <person name="Teague B."/>
            <person name="Potamousis K."/>
            <person name="Churas C."/>
            <person name="Place M."/>
            <person name="Herschleb J."/>
            <person name="Runnheim R."/>
            <person name="Forrest D."/>
            <person name="Amos-Landgraf J."/>
            <person name="Schwartz D.C."/>
            <person name="Cheng Z."/>
            <person name="Lindblad-Toh K."/>
            <person name="Eichler E.E."/>
            <person name="Ponting C.P."/>
        </authorList>
    </citation>
    <scope>NUCLEOTIDE SEQUENCE [LARGE SCALE GENOMIC DNA]</scope>
    <source>
        <strain>C57BL/6J</strain>
    </source>
</reference>
<reference key="3">
    <citation type="journal article" date="2005" name="Science">
        <title>The transcriptional landscape of the mammalian genome.</title>
        <authorList>
            <person name="Carninci P."/>
            <person name="Kasukawa T."/>
            <person name="Katayama S."/>
            <person name="Gough J."/>
            <person name="Frith M.C."/>
            <person name="Maeda N."/>
            <person name="Oyama R."/>
            <person name="Ravasi T."/>
            <person name="Lenhard B."/>
            <person name="Wells C."/>
            <person name="Kodzius R."/>
            <person name="Shimokawa K."/>
            <person name="Bajic V.B."/>
            <person name="Brenner S.E."/>
            <person name="Batalov S."/>
            <person name="Forrest A.R."/>
            <person name="Zavolan M."/>
            <person name="Davis M.J."/>
            <person name="Wilming L.G."/>
            <person name="Aidinis V."/>
            <person name="Allen J.E."/>
            <person name="Ambesi-Impiombato A."/>
            <person name="Apweiler R."/>
            <person name="Aturaliya R.N."/>
            <person name="Bailey T.L."/>
            <person name="Bansal M."/>
            <person name="Baxter L."/>
            <person name="Beisel K.W."/>
            <person name="Bersano T."/>
            <person name="Bono H."/>
            <person name="Chalk A.M."/>
            <person name="Chiu K.P."/>
            <person name="Choudhary V."/>
            <person name="Christoffels A."/>
            <person name="Clutterbuck D.R."/>
            <person name="Crowe M.L."/>
            <person name="Dalla E."/>
            <person name="Dalrymple B.P."/>
            <person name="de Bono B."/>
            <person name="Della Gatta G."/>
            <person name="di Bernardo D."/>
            <person name="Down T."/>
            <person name="Engstrom P."/>
            <person name="Fagiolini M."/>
            <person name="Faulkner G."/>
            <person name="Fletcher C.F."/>
            <person name="Fukushima T."/>
            <person name="Furuno M."/>
            <person name="Futaki S."/>
            <person name="Gariboldi M."/>
            <person name="Georgii-Hemming P."/>
            <person name="Gingeras T.R."/>
            <person name="Gojobori T."/>
            <person name="Green R.E."/>
            <person name="Gustincich S."/>
            <person name="Harbers M."/>
            <person name="Hayashi Y."/>
            <person name="Hensch T.K."/>
            <person name="Hirokawa N."/>
            <person name="Hill D."/>
            <person name="Huminiecki L."/>
            <person name="Iacono M."/>
            <person name="Ikeo K."/>
            <person name="Iwama A."/>
            <person name="Ishikawa T."/>
            <person name="Jakt M."/>
            <person name="Kanapin A."/>
            <person name="Katoh M."/>
            <person name="Kawasawa Y."/>
            <person name="Kelso J."/>
            <person name="Kitamura H."/>
            <person name="Kitano H."/>
            <person name="Kollias G."/>
            <person name="Krishnan S.P."/>
            <person name="Kruger A."/>
            <person name="Kummerfeld S.K."/>
            <person name="Kurochkin I.V."/>
            <person name="Lareau L.F."/>
            <person name="Lazarevic D."/>
            <person name="Lipovich L."/>
            <person name="Liu J."/>
            <person name="Liuni S."/>
            <person name="McWilliam S."/>
            <person name="Madan Babu M."/>
            <person name="Madera M."/>
            <person name="Marchionni L."/>
            <person name="Matsuda H."/>
            <person name="Matsuzawa S."/>
            <person name="Miki H."/>
            <person name="Mignone F."/>
            <person name="Miyake S."/>
            <person name="Morris K."/>
            <person name="Mottagui-Tabar S."/>
            <person name="Mulder N."/>
            <person name="Nakano N."/>
            <person name="Nakauchi H."/>
            <person name="Ng P."/>
            <person name="Nilsson R."/>
            <person name="Nishiguchi S."/>
            <person name="Nishikawa S."/>
            <person name="Nori F."/>
            <person name="Ohara O."/>
            <person name="Okazaki Y."/>
            <person name="Orlando V."/>
            <person name="Pang K.C."/>
            <person name="Pavan W.J."/>
            <person name="Pavesi G."/>
            <person name="Pesole G."/>
            <person name="Petrovsky N."/>
            <person name="Piazza S."/>
            <person name="Reed J."/>
            <person name="Reid J.F."/>
            <person name="Ring B.Z."/>
            <person name="Ringwald M."/>
            <person name="Rost B."/>
            <person name="Ruan Y."/>
            <person name="Salzberg S.L."/>
            <person name="Sandelin A."/>
            <person name="Schneider C."/>
            <person name="Schoenbach C."/>
            <person name="Sekiguchi K."/>
            <person name="Semple C.A."/>
            <person name="Seno S."/>
            <person name="Sessa L."/>
            <person name="Sheng Y."/>
            <person name="Shibata Y."/>
            <person name="Shimada H."/>
            <person name="Shimada K."/>
            <person name="Silva D."/>
            <person name="Sinclair B."/>
            <person name="Sperling S."/>
            <person name="Stupka E."/>
            <person name="Sugiura K."/>
            <person name="Sultana R."/>
            <person name="Takenaka Y."/>
            <person name="Taki K."/>
            <person name="Tammoja K."/>
            <person name="Tan S.L."/>
            <person name="Tang S."/>
            <person name="Taylor M.S."/>
            <person name="Tegner J."/>
            <person name="Teichmann S.A."/>
            <person name="Ueda H.R."/>
            <person name="van Nimwegen E."/>
            <person name="Verardo R."/>
            <person name="Wei C.L."/>
            <person name="Yagi K."/>
            <person name="Yamanishi H."/>
            <person name="Zabarovsky E."/>
            <person name="Zhu S."/>
            <person name="Zimmer A."/>
            <person name="Hide W."/>
            <person name="Bult C."/>
            <person name="Grimmond S.M."/>
            <person name="Teasdale R.D."/>
            <person name="Liu E.T."/>
            <person name="Brusic V."/>
            <person name="Quackenbush J."/>
            <person name="Wahlestedt C."/>
            <person name="Mattick J.S."/>
            <person name="Hume D.A."/>
            <person name="Kai C."/>
            <person name="Sasaki D."/>
            <person name="Tomaru Y."/>
            <person name="Fukuda S."/>
            <person name="Kanamori-Katayama M."/>
            <person name="Suzuki M."/>
            <person name="Aoki J."/>
            <person name="Arakawa T."/>
            <person name="Iida J."/>
            <person name="Imamura K."/>
            <person name="Itoh M."/>
            <person name="Kato T."/>
            <person name="Kawaji H."/>
            <person name="Kawagashira N."/>
            <person name="Kawashima T."/>
            <person name="Kojima M."/>
            <person name="Kondo S."/>
            <person name="Konno H."/>
            <person name="Nakano K."/>
            <person name="Ninomiya N."/>
            <person name="Nishio T."/>
            <person name="Okada M."/>
            <person name="Plessy C."/>
            <person name="Shibata K."/>
            <person name="Shiraki T."/>
            <person name="Suzuki S."/>
            <person name="Tagami M."/>
            <person name="Waki K."/>
            <person name="Watahiki A."/>
            <person name="Okamura-Oho Y."/>
            <person name="Suzuki H."/>
            <person name="Kawai J."/>
            <person name="Hayashizaki Y."/>
        </authorList>
    </citation>
    <scope>NUCLEOTIDE SEQUENCE [LARGE SCALE MRNA] OF 2481-3749</scope>
    <source>
        <strain>C57BL/6J</strain>
        <tissue>Kidney</tissue>
    </source>
</reference>
<reference key="4">
    <citation type="journal article" date="2002" name="Nat. Genet.">
        <title>Mutations in DNAH5 cause primary ciliary dyskinesia and randomization of left-right asymmetry.</title>
        <authorList>
            <person name="Olbrich H."/>
            <person name="Haeffner K."/>
            <person name="Kispert A."/>
            <person name="Voelkel A."/>
            <person name="Volz A."/>
            <person name="Sasmaz G."/>
            <person name="Reinhardt R."/>
            <person name="Hennig S."/>
            <person name="Lehrach H."/>
            <person name="Konietzko N."/>
            <person name="Zariwala M."/>
            <person name="Noone P.G."/>
            <person name="Knowles M."/>
            <person name="Mitchison H.M."/>
            <person name="Meeks M."/>
            <person name="Chung E.M.K."/>
            <person name="Hildebrandt F."/>
            <person name="Sudbrak R."/>
            <person name="Omran H."/>
        </authorList>
    </citation>
    <scope>TISSUE SPECIFICITY</scope>
    <scope>DEVELOPMENTAL STAGE</scope>
</reference>
<reference key="5">
    <citation type="journal article" date="2004" name="Hum. Mol. Genet.">
        <title>Dysfunction of axonemal dynein heavy chain Mdnah5 inhibits ependymal flow and reveals a novel mechanism for hydrocephalus formation.</title>
        <authorList>
            <person name="Ibanez-Tallon I."/>
            <person name="Pagenstecher A."/>
            <person name="Fliegauf M."/>
            <person name="Olbrich H."/>
            <person name="Kispert A."/>
            <person name="Ketelsen U.-P."/>
            <person name="North A."/>
            <person name="Heintz N."/>
            <person name="Omran H."/>
        </authorList>
    </citation>
    <scope>FUNCTION</scope>
    <scope>TISSUE SPECIFICITY</scope>
    <scope>DISRUPTION PHENOTYPE</scope>
</reference>
<reference key="6">
    <citation type="journal article" date="2010" name="Cell">
        <title>A tissue-specific atlas of mouse protein phosphorylation and expression.</title>
        <authorList>
            <person name="Huttlin E.L."/>
            <person name="Jedrychowski M.P."/>
            <person name="Elias J.E."/>
            <person name="Goswami T."/>
            <person name="Rad R."/>
            <person name="Beausoleil S.A."/>
            <person name="Villen J."/>
            <person name="Haas W."/>
            <person name="Sowa M.E."/>
            <person name="Gygi S.P."/>
        </authorList>
    </citation>
    <scope>IDENTIFICATION BY MASS SPECTROMETRY [LARGE SCALE ANALYSIS]</scope>
    <source>
        <tissue>Lung</tissue>
    </source>
</reference>
<reference key="7">
    <citation type="journal article" date="2020" name="PLoS Genet.">
        <title>CFAP53 regulates mammalian cilia-type motility patterns through differential localization and recruitment of axonemal dynein components.</title>
        <authorList>
            <person name="Ide T."/>
            <person name="Twan W.K."/>
            <person name="Lu H."/>
            <person name="Ikawa Y."/>
            <person name="Lim L.X."/>
            <person name="Henninger N."/>
            <person name="Nishimura H."/>
            <person name="Takaoka K."/>
            <person name="Narasimhan V."/>
            <person name="Yan X."/>
            <person name="Shiratori H."/>
            <person name="Roy S."/>
            <person name="Hamada H."/>
        </authorList>
    </citation>
    <scope>SUBCELLULAR LOCATION</scope>
</reference>
<gene>
    <name evidence="10" type="primary">Dnah5</name>
    <name type="synonym">Dnahc5</name>
</gene>
<name>DYH5_MOUSE</name>
<evidence type="ECO:0000250" key="1"/>
<evidence type="ECO:0000250" key="2">
    <source>
        <dbReference type="UniProtKB" id="M0R8U1"/>
    </source>
</evidence>
<evidence type="ECO:0000255" key="3"/>
<evidence type="ECO:0000256" key="4">
    <source>
        <dbReference type="SAM" id="MobiDB-lite"/>
    </source>
</evidence>
<evidence type="ECO:0000269" key="5">
    <source>
    </source>
</evidence>
<evidence type="ECO:0000269" key="6">
    <source>
    </source>
</evidence>
<evidence type="ECO:0000269" key="7">
    <source>
    </source>
</evidence>
<evidence type="ECO:0000269" key="8">
    <source>
    </source>
</evidence>
<evidence type="ECO:0000305" key="9"/>
<evidence type="ECO:0000312" key="10">
    <source>
        <dbReference type="MGI" id="MGI:107718"/>
    </source>
</evidence>
<proteinExistence type="evidence at protein level"/>
<comment type="function">
    <text evidence="7">Force generating protein of respiratory cilia. Produces force towards the minus ends of microtubules. Dynein has ATPase activity; the force-producing power stroke is thought to occur on release of ADP. Required for structural and functional integrity of the cilia of ependymal cells lining the brain ventricles.</text>
</comment>
<comment type="subunit">
    <text evidence="2">Interacts with DNAL1 (By similarity). Consists of at least two heavy chains and a number of intermediate and light chains.</text>
</comment>
<comment type="subcellular location">
    <subcellularLocation>
        <location evidence="8">Cytoplasm</location>
        <location evidence="8">Cytoskeleton</location>
        <location evidence="8">Cilium axoneme</location>
    </subcellularLocation>
</comment>
<comment type="tissue specificity">
    <text evidence="5 7">Strongly expressed in lung and kidney and weaker expression seen in brain, heart and testis. In the brain, expressed in ependymal cells lining the brain ventricles and the aqueduct.</text>
</comment>
<comment type="developmental stage">
    <text evidence="5">Embryos show a weak expression confined to the node from 7.0 to 8.25 dpc.</text>
</comment>
<comment type="domain">
    <text>Dynein heavy chains probably consist of an N-terminal stem (which binds cargo and interacts with other dynein components), and the head or motor domain. The motor contains six tandemly-linked AAA domains in the head, which form a ring. A stalk-like structure (formed by two of the coiled coil domains) protrudes between AAA 4 and AAA 5 and terminates in a microtubule-binding site. A seventh domain may also contribute to this ring; it is not clear whether the N-terminus or the C-terminus forms this extra domain. There are four well-conserved and two non-conserved ATPase sites, one per AAA domain. Probably only one of these (within AAA 1) actually hydrolyzes ATP, the others may serve a regulatory function.</text>
</comment>
<comment type="disease">
    <text evidence="6">Defects in Dnah5 are the cause of primary ciliary dyskinesia (PCD). PCD is characterized by recurrent respiratory infections, situs inversus and ciliary immotility and hydrocephalus.</text>
</comment>
<comment type="disruption phenotype">
    <text evidence="7">Mice display defects in motility of the ependymal cells lining the brain ventricles and aqueduct. This results in impaired flow of cerebrospinal fluid through the cerebral aqueduct and gives rise to closure of the aqueduct and subsequent formation of triventricular hydrocephalus during early postnatal brain development.</text>
</comment>
<comment type="similarity">
    <text evidence="9">Belongs to the dynein heavy chain family.</text>
</comment>
<organism>
    <name type="scientific">Mus musculus</name>
    <name type="common">Mouse</name>
    <dbReference type="NCBI Taxonomy" id="10090"/>
    <lineage>
        <taxon>Eukaryota</taxon>
        <taxon>Metazoa</taxon>
        <taxon>Chordata</taxon>
        <taxon>Craniata</taxon>
        <taxon>Vertebrata</taxon>
        <taxon>Euteleostomi</taxon>
        <taxon>Mammalia</taxon>
        <taxon>Eutheria</taxon>
        <taxon>Euarchontoglires</taxon>
        <taxon>Glires</taxon>
        <taxon>Rodentia</taxon>
        <taxon>Myomorpha</taxon>
        <taxon>Muroidea</taxon>
        <taxon>Muridae</taxon>
        <taxon>Murinae</taxon>
        <taxon>Mus</taxon>
        <taxon>Mus</taxon>
    </lineage>
</organism>
<keyword id="KW-0067">ATP-binding</keyword>
<keyword id="KW-0966">Cell projection</keyword>
<keyword id="KW-1186">Ciliopathy</keyword>
<keyword id="KW-0969">Cilium</keyword>
<keyword id="KW-0175">Coiled coil</keyword>
<keyword id="KW-0963">Cytoplasm</keyword>
<keyword id="KW-0206">Cytoskeleton</keyword>
<keyword id="KW-0243">Dynein</keyword>
<keyword id="KW-0493">Microtubule</keyword>
<keyword id="KW-0505">Motor protein</keyword>
<keyword id="KW-0547">Nucleotide-binding</keyword>
<keyword id="KW-0990">Primary ciliary dyskinesia</keyword>
<keyword id="KW-1185">Reference proteome</keyword>
<keyword id="KW-0677">Repeat</keyword>